<evidence type="ECO:0000255" key="1">
    <source>
        <dbReference type="HAMAP-Rule" id="MF_00815"/>
    </source>
</evidence>
<feature type="chain" id="PRO_0000073389" description="ATP synthase gamma chain">
    <location>
        <begin position="1"/>
        <end position="291"/>
    </location>
</feature>
<protein>
    <recommendedName>
        <fullName evidence="1">ATP synthase gamma chain</fullName>
    </recommendedName>
    <alternativeName>
        <fullName evidence="1">ATP synthase F1 sector gamma subunit</fullName>
    </alternativeName>
    <alternativeName>
        <fullName evidence="1">F-ATPase gamma subunit</fullName>
    </alternativeName>
</protein>
<dbReference type="EMBL" id="AE004092">
    <property type="protein sequence ID" value="AAK33702.1"/>
    <property type="molecule type" value="Genomic_DNA"/>
</dbReference>
<dbReference type="EMBL" id="CP000017">
    <property type="protein sequence ID" value="AAZ51198.1"/>
    <property type="molecule type" value="Genomic_DNA"/>
</dbReference>
<dbReference type="RefSeq" id="NP_268981.1">
    <property type="nucleotide sequence ID" value="NC_002737.2"/>
</dbReference>
<dbReference type="SMR" id="Q9A0I8"/>
<dbReference type="PaxDb" id="1314-HKU360_00590"/>
<dbReference type="KEGG" id="spy:SPy_0759"/>
<dbReference type="KEGG" id="spz:M5005_Spy0580"/>
<dbReference type="PATRIC" id="fig|160490.10.peg.647"/>
<dbReference type="HOGENOM" id="CLU_050669_0_1_9"/>
<dbReference type="OMA" id="MQITSAM"/>
<dbReference type="Proteomes" id="UP000000750">
    <property type="component" value="Chromosome"/>
</dbReference>
<dbReference type="GO" id="GO:0005886">
    <property type="term" value="C:plasma membrane"/>
    <property type="evidence" value="ECO:0007669"/>
    <property type="project" value="UniProtKB-SubCell"/>
</dbReference>
<dbReference type="GO" id="GO:0045259">
    <property type="term" value="C:proton-transporting ATP synthase complex"/>
    <property type="evidence" value="ECO:0007669"/>
    <property type="project" value="UniProtKB-KW"/>
</dbReference>
<dbReference type="GO" id="GO:0005524">
    <property type="term" value="F:ATP binding"/>
    <property type="evidence" value="ECO:0007669"/>
    <property type="project" value="UniProtKB-UniRule"/>
</dbReference>
<dbReference type="GO" id="GO:0046933">
    <property type="term" value="F:proton-transporting ATP synthase activity, rotational mechanism"/>
    <property type="evidence" value="ECO:0007669"/>
    <property type="project" value="UniProtKB-UniRule"/>
</dbReference>
<dbReference type="GO" id="GO:0042777">
    <property type="term" value="P:proton motive force-driven plasma membrane ATP synthesis"/>
    <property type="evidence" value="ECO:0007669"/>
    <property type="project" value="UniProtKB-UniRule"/>
</dbReference>
<dbReference type="CDD" id="cd12151">
    <property type="entry name" value="F1-ATPase_gamma"/>
    <property type="match status" value="1"/>
</dbReference>
<dbReference type="FunFam" id="3.40.1380.10:FF:000002">
    <property type="entry name" value="ATP synthase gamma chain"/>
    <property type="match status" value="1"/>
</dbReference>
<dbReference type="Gene3D" id="3.40.1380.10">
    <property type="match status" value="1"/>
</dbReference>
<dbReference type="Gene3D" id="1.10.287.80">
    <property type="entry name" value="ATP synthase, gamma subunit, helix hairpin domain"/>
    <property type="match status" value="1"/>
</dbReference>
<dbReference type="HAMAP" id="MF_00815">
    <property type="entry name" value="ATP_synth_gamma_bact"/>
    <property type="match status" value="1"/>
</dbReference>
<dbReference type="InterPro" id="IPR035968">
    <property type="entry name" value="ATP_synth_F1_ATPase_gsu"/>
</dbReference>
<dbReference type="InterPro" id="IPR000131">
    <property type="entry name" value="ATP_synth_F1_gsu"/>
</dbReference>
<dbReference type="InterPro" id="IPR023632">
    <property type="entry name" value="ATP_synth_F1_gsu_CS"/>
</dbReference>
<dbReference type="NCBIfam" id="TIGR01146">
    <property type="entry name" value="ATPsyn_F1gamma"/>
    <property type="match status" value="1"/>
</dbReference>
<dbReference type="NCBIfam" id="NF004147">
    <property type="entry name" value="PRK05621.2-1"/>
    <property type="match status" value="1"/>
</dbReference>
<dbReference type="PANTHER" id="PTHR11693">
    <property type="entry name" value="ATP SYNTHASE GAMMA CHAIN"/>
    <property type="match status" value="1"/>
</dbReference>
<dbReference type="PANTHER" id="PTHR11693:SF22">
    <property type="entry name" value="ATP SYNTHASE SUBUNIT GAMMA, MITOCHONDRIAL"/>
    <property type="match status" value="1"/>
</dbReference>
<dbReference type="Pfam" id="PF00231">
    <property type="entry name" value="ATP-synt"/>
    <property type="match status" value="1"/>
</dbReference>
<dbReference type="PRINTS" id="PR00126">
    <property type="entry name" value="ATPASEGAMMA"/>
</dbReference>
<dbReference type="SUPFAM" id="SSF52943">
    <property type="entry name" value="ATP synthase (F1-ATPase), gamma subunit"/>
    <property type="match status" value="1"/>
</dbReference>
<dbReference type="PROSITE" id="PS00153">
    <property type="entry name" value="ATPASE_GAMMA"/>
    <property type="match status" value="1"/>
</dbReference>
<keyword id="KW-0066">ATP synthesis</keyword>
<keyword id="KW-1003">Cell membrane</keyword>
<keyword id="KW-0139">CF(1)</keyword>
<keyword id="KW-0375">Hydrogen ion transport</keyword>
<keyword id="KW-0406">Ion transport</keyword>
<keyword id="KW-0472">Membrane</keyword>
<keyword id="KW-1185">Reference proteome</keyword>
<keyword id="KW-0813">Transport</keyword>
<comment type="function">
    <text evidence="1">Produces ATP from ADP in the presence of a proton gradient across the membrane. The gamma chain is believed to be important in regulating ATPase activity and the flow of protons through the CF(0) complex.</text>
</comment>
<comment type="subunit">
    <text evidence="1">F-type ATPases have 2 components, CF(1) - the catalytic core - and CF(0) - the membrane proton channel. CF(1) has five subunits: alpha(3), beta(3), gamma(1), delta(1), epsilon(1). CF(0) has three main subunits: a, b and c.</text>
</comment>
<comment type="subcellular location">
    <subcellularLocation>
        <location evidence="1">Cell membrane</location>
        <topology evidence="1">Peripheral membrane protein</topology>
    </subcellularLocation>
</comment>
<comment type="similarity">
    <text evidence="1">Belongs to the ATPase gamma chain family.</text>
</comment>
<proteinExistence type="inferred from homology"/>
<name>ATPG_STRP1</name>
<accession>Q9A0I8</accession>
<accession>Q48ZM0</accession>
<organism>
    <name type="scientific">Streptococcus pyogenes serotype M1</name>
    <dbReference type="NCBI Taxonomy" id="301447"/>
    <lineage>
        <taxon>Bacteria</taxon>
        <taxon>Bacillati</taxon>
        <taxon>Bacillota</taxon>
        <taxon>Bacilli</taxon>
        <taxon>Lactobacillales</taxon>
        <taxon>Streptococcaceae</taxon>
        <taxon>Streptococcus</taxon>
    </lineage>
</organism>
<reference key="1">
    <citation type="journal article" date="2001" name="Proc. Natl. Acad. Sci. U.S.A.">
        <title>Complete genome sequence of an M1 strain of Streptococcus pyogenes.</title>
        <authorList>
            <person name="Ferretti J.J."/>
            <person name="McShan W.M."/>
            <person name="Ajdic D.J."/>
            <person name="Savic D.J."/>
            <person name="Savic G."/>
            <person name="Lyon K."/>
            <person name="Primeaux C."/>
            <person name="Sezate S."/>
            <person name="Suvorov A.N."/>
            <person name="Kenton S."/>
            <person name="Lai H.S."/>
            <person name="Lin S.P."/>
            <person name="Qian Y."/>
            <person name="Jia H.G."/>
            <person name="Najar F.Z."/>
            <person name="Ren Q."/>
            <person name="Zhu H."/>
            <person name="Song L."/>
            <person name="White J."/>
            <person name="Yuan X."/>
            <person name="Clifton S.W."/>
            <person name="Roe B.A."/>
            <person name="McLaughlin R.E."/>
        </authorList>
    </citation>
    <scope>NUCLEOTIDE SEQUENCE [LARGE SCALE GENOMIC DNA]</scope>
    <source>
        <strain>ATCC 700294 / SF370 / Serotype M1</strain>
    </source>
</reference>
<reference key="2">
    <citation type="journal article" date="2005" name="J. Infect. Dis.">
        <title>Evolutionary origin and emergence of a highly successful clone of serotype M1 group A Streptococcus involved multiple horizontal gene transfer events.</title>
        <authorList>
            <person name="Sumby P."/>
            <person name="Porcella S.F."/>
            <person name="Madrigal A.G."/>
            <person name="Barbian K.D."/>
            <person name="Virtaneva K."/>
            <person name="Ricklefs S.M."/>
            <person name="Sturdevant D.E."/>
            <person name="Graham M.R."/>
            <person name="Vuopio-Varkila J."/>
            <person name="Hoe N.P."/>
            <person name="Musser J.M."/>
        </authorList>
    </citation>
    <scope>NUCLEOTIDE SEQUENCE [LARGE SCALE GENOMIC DNA]</scope>
    <source>
        <strain>ATCC BAA-947 / MGAS5005 / Serotype M1</strain>
    </source>
</reference>
<gene>
    <name evidence="1" type="primary">atpG</name>
    <name type="ordered locus">SPy_0759</name>
    <name type="ordered locus">M5005_Spy0580</name>
</gene>
<sequence>MAGSLSEIKAKIISTEKTSKITSAMRMVSSAKLVKSEQAARDFQIYASKIRQITTDLLKSELTIGSDNPMLVSRPVKKTGYIVITSDKGLVGGYNSKILKSVMDMITEYHADGDYEIISIGSVGSDFFKARGMNVAFELRGLADQPSFEQVRQIISQSVDMFVNEIFDELYVCYNHHVNSLTSQVRVQQMLPISDLVADEAAEEGVTGFELEPNRHDILDQLLPQFTESLIYGAIIDAKTAEHAAGMTAMQTATDNAKNVINDLTIQYNRARQAAITQEITEIVAGANALE</sequence>